<gene>
    <name evidence="22" type="primary">GTPBP2</name>
</gene>
<reference evidence="15 21" key="1">
    <citation type="journal article" date="2000" name="Gene">
        <title>Cloning, expression analysis, and chromosomal mapping of GTPBP2, a novel member of the G protein family.</title>
        <authorList>
            <person name="Watanabe M."/>
            <person name="Yoshida K."/>
            <person name="Hida M."/>
            <person name="Kato H."/>
            <person name="Uchida K."/>
            <person name="Yamaguchi R."/>
            <person name="Tateyama S."/>
            <person name="Sugano S."/>
        </authorList>
    </citation>
    <scope>NUCLEOTIDE SEQUENCE [MRNA] (ISOFORM 2)</scope>
    <scope>TISSUE SPECIFICITY</scope>
</reference>
<reference evidence="22" key="2">
    <citation type="journal article" date="2003" name="Nature">
        <title>The DNA sequence and analysis of human chromosome 6.</title>
        <authorList>
            <person name="Mungall A.J."/>
            <person name="Palmer S.A."/>
            <person name="Sims S.K."/>
            <person name="Edwards C.A."/>
            <person name="Ashurst J.L."/>
            <person name="Wilming L."/>
            <person name="Jones M.C."/>
            <person name="Horton R."/>
            <person name="Hunt S.E."/>
            <person name="Scott C.E."/>
            <person name="Gilbert J.G.R."/>
            <person name="Clamp M.E."/>
            <person name="Bethel G."/>
            <person name="Milne S."/>
            <person name="Ainscough R."/>
            <person name="Almeida J.P."/>
            <person name="Ambrose K.D."/>
            <person name="Andrews T.D."/>
            <person name="Ashwell R.I.S."/>
            <person name="Babbage A.K."/>
            <person name="Bagguley C.L."/>
            <person name="Bailey J."/>
            <person name="Banerjee R."/>
            <person name="Barker D.J."/>
            <person name="Barlow K.F."/>
            <person name="Bates K."/>
            <person name="Beare D.M."/>
            <person name="Beasley H."/>
            <person name="Beasley O."/>
            <person name="Bird C.P."/>
            <person name="Blakey S.E."/>
            <person name="Bray-Allen S."/>
            <person name="Brook J."/>
            <person name="Brown A.J."/>
            <person name="Brown J.Y."/>
            <person name="Burford D.C."/>
            <person name="Burrill W."/>
            <person name="Burton J."/>
            <person name="Carder C."/>
            <person name="Carter N.P."/>
            <person name="Chapman J.C."/>
            <person name="Clark S.Y."/>
            <person name="Clark G."/>
            <person name="Clee C.M."/>
            <person name="Clegg S."/>
            <person name="Cobley V."/>
            <person name="Collier R.E."/>
            <person name="Collins J.E."/>
            <person name="Colman L.K."/>
            <person name="Corby N.R."/>
            <person name="Coville G.J."/>
            <person name="Culley K.M."/>
            <person name="Dhami P."/>
            <person name="Davies J."/>
            <person name="Dunn M."/>
            <person name="Earthrowl M.E."/>
            <person name="Ellington A.E."/>
            <person name="Evans K.A."/>
            <person name="Faulkner L."/>
            <person name="Francis M.D."/>
            <person name="Frankish A."/>
            <person name="Frankland J."/>
            <person name="French L."/>
            <person name="Garner P."/>
            <person name="Garnett J."/>
            <person name="Ghori M.J."/>
            <person name="Gilby L.M."/>
            <person name="Gillson C.J."/>
            <person name="Glithero R.J."/>
            <person name="Grafham D.V."/>
            <person name="Grant M."/>
            <person name="Gribble S."/>
            <person name="Griffiths C."/>
            <person name="Griffiths M.N.D."/>
            <person name="Hall R."/>
            <person name="Halls K.S."/>
            <person name="Hammond S."/>
            <person name="Harley J.L."/>
            <person name="Hart E.A."/>
            <person name="Heath P.D."/>
            <person name="Heathcott R."/>
            <person name="Holmes S.J."/>
            <person name="Howden P.J."/>
            <person name="Howe K.L."/>
            <person name="Howell G.R."/>
            <person name="Huckle E."/>
            <person name="Humphray S.J."/>
            <person name="Humphries M.D."/>
            <person name="Hunt A.R."/>
            <person name="Johnson C.M."/>
            <person name="Joy A.A."/>
            <person name="Kay M."/>
            <person name="Keenan S.J."/>
            <person name="Kimberley A.M."/>
            <person name="King A."/>
            <person name="Laird G.K."/>
            <person name="Langford C."/>
            <person name="Lawlor S."/>
            <person name="Leongamornlert D.A."/>
            <person name="Leversha M."/>
            <person name="Lloyd C.R."/>
            <person name="Lloyd D.M."/>
            <person name="Loveland J.E."/>
            <person name="Lovell J."/>
            <person name="Martin S."/>
            <person name="Mashreghi-Mohammadi M."/>
            <person name="Maslen G.L."/>
            <person name="Matthews L."/>
            <person name="McCann O.T."/>
            <person name="McLaren S.J."/>
            <person name="McLay K."/>
            <person name="McMurray A."/>
            <person name="Moore M.J.F."/>
            <person name="Mullikin J.C."/>
            <person name="Niblett D."/>
            <person name="Nickerson T."/>
            <person name="Novik K.L."/>
            <person name="Oliver K."/>
            <person name="Overton-Larty E.K."/>
            <person name="Parker A."/>
            <person name="Patel R."/>
            <person name="Pearce A.V."/>
            <person name="Peck A.I."/>
            <person name="Phillimore B.J.C.T."/>
            <person name="Phillips S."/>
            <person name="Plumb R.W."/>
            <person name="Porter K.M."/>
            <person name="Ramsey Y."/>
            <person name="Ranby S.A."/>
            <person name="Rice C.M."/>
            <person name="Ross M.T."/>
            <person name="Searle S.M."/>
            <person name="Sehra H.K."/>
            <person name="Sheridan E."/>
            <person name="Skuce C.D."/>
            <person name="Smith S."/>
            <person name="Smith M."/>
            <person name="Spraggon L."/>
            <person name="Squares S.L."/>
            <person name="Steward C.A."/>
            <person name="Sycamore N."/>
            <person name="Tamlyn-Hall G."/>
            <person name="Tester J."/>
            <person name="Theaker A.J."/>
            <person name="Thomas D.W."/>
            <person name="Thorpe A."/>
            <person name="Tracey A."/>
            <person name="Tromans A."/>
            <person name="Tubby B."/>
            <person name="Wall M."/>
            <person name="Wallis J.M."/>
            <person name="West A.P."/>
            <person name="White S.S."/>
            <person name="Whitehead S.L."/>
            <person name="Whittaker H."/>
            <person name="Wild A."/>
            <person name="Willey D.J."/>
            <person name="Wilmer T.E."/>
            <person name="Wood J.M."/>
            <person name="Wray P.W."/>
            <person name="Wyatt J.C."/>
            <person name="Young L."/>
            <person name="Younger R.M."/>
            <person name="Bentley D.R."/>
            <person name="Coulson A."/>
            <person name="Durbin R.M."/>
            <person name="Hubbard T."/>
            <person name="Sulston J.E."/>
            <person name="Dunham I."/>
            <person name="Rogers J."/>
            <person name="Beck S."/>
        </authorList>
    </citation>
    <scope>NUCLEOTIDE SEQUENCE [LARGE SCALE GENOMIC DNA]</scope>
</reference>
<reference evidence="15 20" key="3">
    <citation type="journal article" date="2004" name="Nat. Genet.">
        <title>Complete sequencing and characterization of 21,243 full-length human cDNAs.</title>
        <authorList>
            <person name="Ota T."/>
            <person name="Suzuki Y."/>
            <person name="Nishikawa T."/>
            <person name="Otsuki T."/>
            <person name="Sugiyama T."/>
            <person name="Irie R."/>
            <person name="Wakamatsu A."/>
            <person name="Hayashi K."/>
            <person name="Sato H."/>
            <person name="Nagai K."/>
            <person name="Kimura K."/>
            <person name="Makita H."/>
            <person name="Sekine M."/>
            <person name="Obayashi M."/>
            <person name="Nishi T."/>
            <person name="Shibahara T."/>
            <person name="Tanaka T."/>
            <person name="Ishii S."/>
            <person name="Yamamoto J."/>
            <person name="Saito K."/>
            <person name="Kawai Y."/>
            <person name="Isono Y."/>
            <person name="Nakamura Y."/>
            <person name="Nagahari K."/>
            <person name="Murakami K."/>
            <person name="Yasuda T."/>
            <person name="Iwayanagi T."/>
            <person name="Wagatsuma M."/>
            <person name="Shiratori A."/>
            <person name="Sudo H."/>
            <person name="Hosoiri T."/>
            <person name="Kaku Y."/>
            <person name="Kodaira H."/>
            <person name="Kondo H."/>
            <person name="Sugawara M."/>
            <person name="Takahashi M."/>
            <person name="Kanda K."/>
            <person name="Yokoi T."/>
            <person name="Furuya T."/>
            <person name="Kikkawa E."/>
            <person name="Omura Y."/>
            <person name="Abe K."/>
            <person name="Kamihara K."/>
            <person name="Katsuta N."/>
            <person name="Sato K."/>
            <person name="Tanikawa M."/>
            <person name="Yamazaki M."/>
            <person name="Ninomiya K."/>
            <person name="Ishibashi T."/>
            <person name="Yamashita H."/>
            <person name="Murakawa K."/>
            <person name="Fujimori K."/>
            <person name="Tanai H."/>
            <person name="Kimata M."/>
            <person name="Watanabe M."/>
            <person name="Hiraoka S."/>
            <person name="Chiba Y."/>
            <person name="Ishida S."/>
            <person name="Ono Y."/>
            <person name="Takiguchi S."/>
            <person name="Watanabe S."/>
            <person name="Yosida M."/>
            <person name="Hotuta T."/>
            <person name="Kusano J."/>
            <person name="Kanehori K."/>
            <person name="Takahashi-Fujii A."/>
            <person name="Hara H."/>
            <person name="Tanase T.-O."/>
            <person name="Nomura Y."/>
            <person name="Togiya S."/>
            <person name="Komai F."/>
            <person name="Hara R."/>
            <person name="Takeuchi K."/>
            <person name="Arita M."/>
            <person name="Imose N."/>
            <person name="Musashino K."/>
            <person name="Yuuki H."/>
            <person name="Oshima A."/>
            <person name="Sasaki N."/>
            <person name="Aotsuka S."/>
            <person name="Yoshikawa Y."/>
            <person name="Matsunawa H."/>
            <person name="Ichihara T."/>
            <person name="Shiohata N."/>
            <person name="Sano S."/>
            <person name="Moriya S."/>
            <person name="Momiyama H."/>
            <person name="Satoh N."/>
            <person name="Takami S."/>
            <person name="Terashima Y."/>
            <person name="Suzuki O."/>
            <person name="Nakagawa S."/>
            <person name="Senoh A."/>
            <person name="Mizoguchi H."/>
            <person name="Goto Y."/>
            <person name="Shimizu F."/>
            <person name="Wakebe H."/>
            <person name="Hishigaki H."/>
            <person name="Watanabe T."/>
            <person name="Sugiyama A."/>
            <person name="Takemoto M."/>
            <person name="Kawakami B."/>
            <person name="Yamazaki M."/>
            <person name="Watanabe K."/>
            <person name="Kumagai A."/>
            <person name="Itakura S."/>
            <person name="Fukuzumi Y."/>
            <person name="Fujimori Y."/>
            <person name="Komiyama M."/>
            <person name="Tashiro H."/>
            <person name="Tanigami A."/>
            <person name="Fujiwara T."/>
            <person name="Ono T."/>
            <person name="Yamada K."/>
            <person name="Fujii Y."/>
            <person name="Ozaki K."/>
            <person name="Hirao M."/>
            <person name="Ohmori Y."/>
            <person name="Kawabata A."/>
            <person name="Hikiji T."/>
            <person name="Kobatake N."/>
            <person name="Inagaki H."/>
            <person name="Ikema Y."/>
            <person name="Okamoto S."/>
            <person name="Okitani R."/>
            <person name="Kawakami T."/>
            <person name="Noguchi S."/>
            <person name="Itoh T."/>
            <person name="Shigeta K."/>
            <person name="Senba T."/>
            <person name="Matsumura K."/>
            <person name="Nakajima Y."/>
            <person name="Mizuno T."/>
            <person name="Morinaga M."/>
            <person name="Sasaki M."/>
            <person name="Togashi T."/>
            <person name="Oyama M."/>
            <person name="Hata H."/>
            <person name="Watanabe M."/>
            <person name="Komatsu T."/>
            <person name="Mizushima-Sugano J."/>
            <person name="Satoh T."/>
            <person name="Shirai Y."/>
            <person name="Takahashi Y."/>
            <person name="Nakagawa K."/>
            <person name="Okumura K."/>
            <person name="Nagase T."/>
            <person name="Nomura N."/>
            <person name="Kikuchi H."/>
            <person name="Masuho Y."/>
            <person name="Yamashita R."/>
            <person name="Nakai K."/>
            <person name="Yada T."/>
            <person name="Nakamura Y."/>
            <person name="Ohara O."/>
            <person name="Isogai T."/>
            <person name="Sugano S."/>
        </authorList>
    </citation>
    <scope>NUCLEOTIDE SEQUENCE [LARGE SCALE MRNA] (ISOFORM 3)</scope>
</reference>
<reference evidence="15 19" key="4">
    <citation type="journal article" date="2004" name="Genome Res.">
        <title>The status, quality, and expansion of the NIH full-length cDNA project: the Mammalian Gene Collection (MGC).</title>
        <authorList>
            <consortium name="The MGC Project Team"/>
        </authorList>
    </citation>
    <scope>NUCLEOTIDE SEQUENCE [LARGE SCALE MRNA] (ISOFORM 1)</scope>
    <source>
        <tissue evidence="17">Colon</tissue>
        <tissue evidence="18">Ovary</tissue>
        <tissue evidence="19">Skin</tissue>
    </source>
</reference>
<reference evidence="15 16" key="5">
    <citation type="journal article" date="2000" name="Biochem. Biophys. Res. Commun.">
        <title>Mouse and human GTPBP2, newly identified members of the GP-1 family of GTPase.</title>
        <authorList>
            <person name="Kudo H."/>
            <person name="Senju S."/>
            <person name="Mitsuya H."/>
            <person name="Nishimura Y."/>
        </authorList>
    </citation>
    <scope>NUCLEOTIDE SEQUENCE [MRNA] OF 41-602 (ISOFORM 1)</scope>
    <scope>INDUCTION</scope>
</reference>
<reference key="6">
    <citation type="journal article" date="2007" name="BMC Genomics">
        <title>The full-ORF clone resource of the German cDNA consortium.</title>
        <authorList>
            <person name="Bechtel S."/>
            <person name="Rosenfelder H."/>
            <person name="Duda A."/>
            <person name="Schmidt C.P."/>
            <person name="Ernst U."/>
            <person name="Wellenreuther R."/>
            <person name="Mehrle A."/>
            <person name="Schuster C."/>
            <person name="Bahr A."/>
            <person name="Bloecker H."/>
            <person name="Heubner D."/>
            <person name="Hoerlein A."/>
            <person name="Michel G."/>
            <person name="Wedler H."/>
            <person name="Koehrer K."/>
            <person name="Ottenwaelder B."/>
            <person name="Poustka A."/>
            <person name="Wiemann S."/>
            <person name="Schupp I."/>
        </authorList>
    </citation>
    <scope>NUCLEOTIDE SEQUENCE [LARGE SCALE MRNA] OF 46-602 (ISOFORM 1)</scope>
    <source>
        <tissue>Testis</tissue>
    </source>
</reference>
<reference key="7">
    <citation type="journal article" date="2016" name="Neurobiol. Aging">
        <title>Identification of mutation in GTPBP2 in patients of a family with neurodegeneration accompanied by iron deposition in the brain.</title>
        <authorList>
            <person name="Jaberi E."/>
            <person name="Rohani M."/>
            <person name="Shahidi G.A."/>
            <person name="Nafissi S."/>
            <person name="Arefian E."/>
            <person name="Soleimani M."/>
            <person name="Rasooli P."/>
            <person name="Ahmadieh H."/>
            <person name="Daftarian N."/>
            <person name="KaramiNejadRanjbar M."/>
            <person name="Klotzle B."/>
            <person name="Fan J.B."/>
            <person name="Turk C."/>
            <person name="Steemers F."/>
            <person name="Elahi E."/>
        </authorList>
    </citation>
    <scope>INVOLVEMENT IN JABELS</scope>
</reference>
<reference key="8">
    <citation type="journal article" date="2018" name="Eur. J. Hum. Genet.">
        <title>Biallelic inactivating variants in the GTPBP2 gene cause a neurodevelopmental disorder with severe intellectual disability.</title>
        <authorList>
            <person name="Bertoli-Avella A.M."/>
            <person name="Garcia-Aznar J.M."/>
            <person name="Brandau O."/>
            <person name="Al-Hakami F."/>
            <person name="Yueksel Z."/>
            <person name="Marais A."/>
            <person name="Gruening N.M."/>
            <person name="Abbasi Moheb L."/>
            <person name="Paknia O."/>
            <person name="Alshaikh N."/>
            <person name="Alameer S."/>
            <person name="Marafi M.J."/>
            <person name="Al-Mulla F."/>
            <person name="Al-Sannaa N."/>
            <person name="Rolfs A."/>
            <person name="Bauer P."/>
        </authorList>
    </citation>
    <scope>INVOLVEMENT IN JABELS</scope>
    <scope>VARIANTS JABELS 144-ARG--PHE-602 DEL; 407-GLN--PHE-602 DEL AND 470-ARG--PHE-602 DEL</scope>
</reference>
<reference key="9">
    <citation type="journal article" date="2024" name="Am. J. Hum. Genet.">
        <title>Bi-allelic genetic variants in the translational GTPases GTPBP1 and GTPBP2 cause a distinct identical neurodevelopmental syndrome.</title>
        <authorList>
            <consortium name="SYNAPS Study Group"/>
            <person name="Salpietro V."/>
            <person name="Maroofian R."/>
            <person name="Zaki M.S."/>
            <person name="Wangen J."/>
            <person name="Ciolfi A."/>
            <person name="Barresi S."/>
            <person name="Efthymiou S."/>
            <person name="Lamaze A."/>
            <person name="Aughey G.N."/>
            <person name="Al Mutairi F."/>
            <person name="Rad A."/>
            <person name="Rocca C."/>
            <person name="Cali E."/>
            <person name="Accogli A."/>
            <person name="Zara F."/>
            <person name="Striano P."/>
            <person name="Mojarrad M."/>
            <person name="Tariq H."/>
            <person name="Giacopuzzi E."/>
            <person name="Taylor J.C."/>
            <person name="Oprea G."/>
            <person name="Skrahina V."/>
            <person name="Rehman K.U."/>
            <person name="Abd Elmaksoud M."/>
            <person name="Bassiony M."/>
            <person name="El Said H.G."/>
            <person name="Abdel-Hamid M.S."/>
            <person name="Al Shalan M."/>
            <person name="Seo G."/>
            <person name="Kim S."/>
            <person name="Lee H."/>
            <person name="Khang R."/>
            <person name="Issa M.Y."/>
            <person name="Elbendary H.M."/>
            <person name="Rafat K."/>
            <person name="Marinakis N.M."/>
            <person name="Traeger-Synodinos J."/>
            <person name="Ververi A."/>
            <person name="Sourmpi M."/>
            <person name="Eslahi A."/>
            <person name="Khadivi Zand F."/>
            <person name="Beiraghi Toosi M."/>
            <person name="Babaei M."/>
            <person name="Jackson A."/>
            <person name="Bertoli-Avella A."/>
            <person name="Pagnamenta A.T."/>
            <person name="Niceta M."/>
            <person name="Battini R."/>
            <person name="Corsello A."/>
            <person name="Leoni C."/>
            <person name="Chiarelli F."/>
            <person name="Dallapiccola B."/>
            <person name="Faqeih E.A."/>
            <person name="Tallur K.K."/>
            <person name="Alfadhel M."/>
            <person name="Alobeid E."/>
            <person name="Maddirevula S."/>
            <person name="Mankad K."/>
            <person name="Banka S."/>
            <person name="Ghayoor-Karimiani E."/>
            <person name="Tartaglia M."/>
            <person name="Chung W.K."/>
            <person name="Green R."/>
            <person name="Alkuraya F.S."/>
            <person name="Jepson J.E.C."/>
            <person name="Houlden H."/>
        </authorList>
    </citation>
    <scope>VARIANTS JABELS 3-SER--PHE-602 DEL; PRO-93; 121-ARG--PHE-602 DEL; ARG-125; ASN-319; 332-GLN--PHE-602 DEL; 470-ARG--PHE-602 DEL AND 521-ARG--PHE-602 DEL</scope>
    <scope>INVOLVEMENT IN JABELS</scope>
</reference>
<reference key="10">
    <citation type="journal article" date="2019" name="Clin. Genet.">
        <title>Clinical delineation of GTPBP2-associated neuro-ectodermal syndrome: Report of two new families and review of the literature.</title>
        <authorList>
            <consortium name="Care4Rare Canada Consortium"/>
            <person name="Carter M.T."/>
            <person name="Venkateswaran S."/>
            <person name="Shapira-Zaltsberg G."/>
            <person name="Davila J."/>
            <person name="Humphreys P."/>
            <person name="Kernohan K.D."/>
            <person name="Boycott K.M."/>
        </authorList>
    </citation>
    <scope>VARIANTS JABELS 219-ARG--PHE-602 DEL; 470-ARG--PHE-602 DEL AND 520-ARG--PHE-602 DEL</scope>
</reference>
<name>GTPB2_HUMAN</name>
<comment type="interaction">
    <interactant intactId="EBI-6115579">
        <id>Q9BX10</id>
    </interactant>
    <interactant intactId="EBI-750020">
        <id>P49760</id>
        <label>CLK2</label>
    </interactant>
    <organismsDiffer>false</organismsDiffer>
    <experiments>3</experiments>
</comment>
<comment type="interaction">
    <interactant intactId="EBI-6115579">
        <id>Q9BX10</id>
    </interactant>
    <interactant intactId="EBI-395491">
        <id>Q9UHW5</id>
        <label>GPN3</label>
    </interactant>
    <organismsDiffer>false</organismsDiffer>
    <experiments>3</experiments>
</comment>
<comment type="interaction">
    <interactant intactId="EBI-6115579">
        <id>Q9BX10</id>
    </interactant>
    <interactant intactId="EBI-6115579">
        <id>Q9BX10</id>
        <label>GTPBP2</label>
    </interactant>
    <organismsDiffer>false</organismsDiffer>
    <experiments>3</experiments>
</comment>
<comment type="interaction">
    <interactant intactId="EBI-6115579">
        <id>Q9BX10</id>
    </interactant>
    <interactant intactId="EBI-710124">
        <id>O60341</id>
        <label>KDM1A</label>
    </interactant>
    <organismsDiffer>false</organismsDiffer>
    <experiments>2</experiments>
</comment>
<comment type="interaction">
    <interactant intactId="EBI-6115579">
        <id>Q9BX10</id>
    </interactant>
    <interactant intactId="EBI-398874">
        <id>Q9UBU9</id>
        <label>NXF1</label>
    </interactant>
    <organismsDiffer>false</organismsDiffer>
    <experiments>3</experiments>
</comment>
<comment type="interaction">
    <interactant intactId="EBI-6115579">
        <id>Q9BX10</id>
    </interactant>
    <interactant intactId="EBI-79165">
        <id>Q9NRD5</id>
        <label>PICK1</label>
    </interactant>
    <organismsDiffer>false</organismsDiffer>
    <experiments>3</experiments>
</comment>
<comment type="interaction">
    <interactant intactId="EBI-6115579">
        <id>Q9BX10</id>
    </interactant>
    <interactant intactId="EBI-742388">
        <id>Q9H8W4</id>
        <label>PLEKHF2</label>
    </interactant>
    <organismsDiffer>false</organismsDiffer>
    <experiments>3</experiments>
</comment>
<comment type="interaction">
    <interactant intactId="EBI-6115579">
        <id>Q9BX10</id>
    </interactant>
    <interactant intactId="EBI-351098">
        <id>O14744</id>
        <label>PRMT5</label>
    </interactant>
    <organismsDiffer>false</organismsDiffer>
    <experiments>2</experiments>
</comment>
<comment type="interaction">
    <interactant intactId="EBI-6115579">
        <id>Q9BX10</id>
    </interactant>
    <interactant intactId="EBI-912440">
        <id>Q96LA8</id>
        <label>PRMT6</label>
    </interactant>
    <organismsDiffer>false</organismsDiffer>
    <experiments>2</experiments>
</comment>
<comment type="interaction">
    <interactant intactId="EBI-6115579">
        <id>Q9BX10</id>
    </interactant>
    <interactant intactId="EBI-372273">
        <id>P20618</id>
        <label>PSMB1</label>
    </interactant>
    <organismsDiffer>false</organismsDiffer>
    <experiments>3</experiments>
</comment>
<comment type="interaction">
    <interactant intactId="EBI-6115579">
        <id>Q9BX10</id>
    </interactant>
    <interactant intactId="EBI-1049228">
        <id>P08621</id>
        <label>SNRNP70</label>
    </interactant>
    <organismsDiffer>false</organismsDiffer>
    <experiments>3</experiments>
</comment>
<comment type="interaction">
    <interactant intactId="EBI-6115579">
        <id>Q9BX10</id>
    </interactant>
    <interactant intactId="EBI-349968">
        <id>O43463</id>
        <label>SUV39H1</label>
    </interactant>
    <organismsDiffer>false</organismsDiffer>
    <experiments>2</experiments>
</comment>
<comment type="interaction">
    <interactant intactId="EBI-6115579">
        <id>Q9BX10</id>
    </interactant>
    <interactant intactId="EBI-2932492">
        <id>Q99757</id>
        <label>TXN2</label>
    </interactant>
    <organismsDiffer>false</organismsDiffer>
    <experiments>5</experiments>
</comment>
<comment type="alternative products">
    <event type="alternative splicing"/>
    <isoform>
        <id>Q9BX10-1</id>
        <name evidence="4">1</name>
        <sequence type="displayed"/>
    </isoform>
    <isoform>
        <id>Q9BX10-2</id>
        <name evidence="5">2</name>
        <sequence type="described" ref="VSP_052154"/>
    </isoform>
    <isoform>
        <id>Q9BX10-3</id>
        <name evidence="7">3</name>
        <sequence type="described" ref="VSP_052154 VSP_052156"/>
    </isoform>
    <isoform>
        <id>Q9BX10-4</id>
        <name evidence="6">4</name>
        <sequence type="described" ref="VSP_052155"/>
    </isoform>
</comment>
<comment type="tissue specificity">
    <text evidence="5">Predominantly expressed in thymus, spleen, and testis. Expressed at lower levels in brain, lung, kidney, and ovary.</text>
</comment>
<comment type="induction">
    <text evidence="4">Up-regulated by IFNG/IFN-gamma in human monocytic cell line THP-1.</text>
</comment>
<comment type="disease" evidence="8 9 10 11">
    <disease id="DI-05251">
        <name>Jaberi-Elahi syndrome</name>
        <acronym>JABELS</acronym>
        <description>An autosomal recessive disorder characterized by developmental delay and intellectual disability. Additional variable features include ataxic gait and abnormal movements, visual impairment, microcephaly, abnormal foot or hand posturing, kyphoscoliosis, dysmorphic facial features or seizures. Brain imaging typically shows cerebellar atrophy and hypoplasia of the corpus callosum.</description>
        <dbReference type="MIM" id="617988"/>
    </disease>
    <text>The disease is caused by variants affecting the gene represented in this entry.</text>
</comment>
<comment type="similarity">
    <text evidence="2">Belongs to the TRAFAC class translation factor GTPase superfamily. Classic translation factor GTPase family. GTPBP1 subfamily.</text>
</comment>
<comment type="sequence caution" evidence="15">
    <conflict type="erroneous initiation">
        <sequence resource="EMBL-CDS" id="CAD38999"/>
    </conflict>
    <text>Truncated N-terminus.</text>
</comment>
<evidence type="ECO:0000250" key="1">
    <source>
        <dbReference type="UniProtKB" id="O00178"/>
    </source>
</evidence>
<evidence type="ECO:0000255" key="2">
    <source>
        <dbReference type="PROSITE-ProRule" id="PRU01059"/>
    </source>
</evidence>
<evidence type="ECO:0000256" key="3">
    <source>
        <dbReference type="SAM" id="MobiDB-lite"/>
    </source>
</evidence>
<evidence type="ECO:0000269" key="4">
    <source>
    </source>
</evidence>
<evidence type="ECO:0000269" key="5">
    <source>
    </source>
</evidence>
<evidence type="ECO:0000269" key="6">
    <source>
    </source>
</evidence>
<evidence type="ECO:0000269" key="7">
    <source>
    </source>
</evidence>
<evidence type="ECO:0000269" key="8">
    <source>
    </source>
</evidence>
<evidence type="ECO:0000269" key="9">
    <source>
    </source>
</evidence>
<evidence type="ECO:0000269" key="10">
    <source>
    </source>
</evidence>
<evidence type="ECO:0000269" key="11">
    <source>
    </source>
</evidence>
<evidence type="ECO:0000303" key="12">
    <source>
    </source>
</evidence>
<evidence type="ECO:0000303" key="13">
    <source>
    </source>
</evidence>
<evidence type="ECO:0000303" key="14">
    <source>
    </source>
</evidence>
<evidence type="ECO:0000305" key="15"/>
<evidence type="ECO:0000312" key="16">
    <source>
        <dbReference type="EMBL" id="AAF78884.1"/>
    </source>
</evidence>
<evidence type="ECO:0000312" key="17">
    <source>
        <dbReference type="EMBL" id="AAH20980.2"/>
    </source>
</evidence>
<evidence type="ECO:0000312" key="18">
    <source>
        <dbReference type="EMBL" id="AAH28347.2"/>
    </source>
</evidence>
<evidence type="ECO:0000312" key="19">
    <source>
        <dbReference type="EMBL" id="AAH64968.1"/>
    </source>
</evidence>
<evidence type="ECO:0000312" key="20">
    <source>
        <dbReference type="EMBL" id="BAA91160.1"/>
    </source>
</evidence>
<evidence type="ECO:0000312" key="21">
    <source>
        <dbReference type="EMBL" id="BAB12431.1"/>
    </source>
</evidence>
<evidence type="ECO:0000312" key="22">
    <source>
        <dbReference type="EMBL" id="CAC36269.1"/>
    </source>
</evidence>
<proteinExistence type="evidence at protein level"/>
<dbReference type="EMBL" id="AB024574">
    <property type="protein sequence ID" value="BAB12431.1"/>
    <property type="molecule type" value="mRNA"/>
</dbReference>
<dbReference type="EMBL" id="AL353602">
    <property type="protein sequence ID" value="CAC36269.1"/>
    <property type="molecule type" value="Genomic_DNA"/>
</dbReference>
<dbReference type="EMBL" id="AL353602">
    <property type="protein sequence ID" value="CAI12785.1"/>
    <property type="molecule type" value="Genomic_DNA"/>
</dbReference>
<dbReference type="EMBL" id="AK000430">
    <property type="protein sequence ID" value="BAA91160.1"/>
    <property type="molecule type" value="mRNA"/>
</dbReference>
<dbReference type="EMBL" id="BC020980">
    <property type="protein sequence ID" value="AAH20980.2"/>
    <property type="molecule type" value="mRNA"/>
</dbReference>
<dbReference type="EMBL" id="BC028347">
    <property type="protein sequence ID" value="AAH28347.2"/>
    <property type="molecule type" value="mRNA"/>
</dbReference>
<dbReference type="EMBL" id="BC064968">
    <property type="protein sequence ID" value="AAH64968.1"/>
    <property type="molecule type" value="mRNA"/>
</dbReference>
<dbReference type="EMBL" id="AF168990">
    <property type="protein sequence ID" value="AAF78884.1"/>
    <property type="molecule type" value="mRNA"/>
</dbReference>
<dbReference type="EMBL" id="AL834331">
    <property type="protein sequence ID" value="CAD38999.1"/>
    <property type="status" value="ALT_INIT"/>
    <property type="molecule type" value="mRNA"/>
</dbReference>
<dbReference type="CCDS" id="CCDS4903.1">
    <molecule id="Q9BX10-1"/>
</dbReference>
<dbReference type="CCDS" id="CCDS69124.1">
    <molecule id="Q9BX10-2"/>
</dbReference>
<dbReference type="PIR" id="PC7084">
    <property type="entry name" value="PC7084"/>
</dbReference>
<dbReference type="RefSeq" id="NP_001273145.1">
    <molecule id="Q9BX10-2"/>
    <property type="nucleotide sequence ID" value="NM_001286216.2"/>
</dbReference>
<dbReference type="RefSeq" id="NP_061969.3">
    <molecule id="Q9BX10-1"/>
    <property type="nucleotide sequence ID" value="NM_019096.4"/>
</dbReference>
<dbReference type="RefSeq" id="XP_024302245.1">
    <molecule id="Q9BX10-2"/>
    <property type="nucleotide sequence ID" value="XM_024446477.2"/>
</dbReference>
<dbReference type="RefSeq" id="XP_024302246.1">
    <molecule id="Q9BX10-2"/>
    <property type="nucleotide sequence ID" value="XM_024446478.2"/>
</dbReference>
<dbReference type="RefSeq" id="XP_054211706.1">
    <molecule id="Q9BX10-2"/>
    <property type="nucleotide sequence ID" value="XM_054355731.1"/>
</dbReference>
<dbReference type="RefSeq" id="XP_054211707.1">
    <molecule id="Q9BX10-2"/>
    <property type="nucleotide sequence ID" value="XM_054355732.1"/>
</dbReference>
<dbReference type="SMR" id="Q9BX10"/>
<dbReference type="BioGRID" id="120097">
    <property type="interactions" value="66"/>
</dbReference>
<dbReference type="FunCoup" id="Q9BX10">
    <property type="interactions" value="776"/>
</dbReference>
<dbReference type="IntAct" id="Q9BX10">
    <property type="interactions" value="45"/>
</dbReference>
<dbReference type="MINT" id="Q9BX10"/>
<dbReference type="STRING" id="9606.ENSP00000303997"/>
<dbReference type="GlyGen" id="Q9BX10">
    <property type="glycosylation" value="1 site"/>
</dbReference>
<dbReference type="iPTMnet" id="Q9BX10"/>
<dbReference type="PhosphoSitePlus" id="Q9BX10"/>
<dbReference type="SwissPalm" id="Q9BX10"/>
<dbReference type="BioMuta" id="GTPBP2"/>
<dbReference type="DMDM" id="74752415"/>
<dbReference type="jPOST" id="Q9BX10"/>
<dbReference type="MassIVE" id="Q9BX10"/>
<dbReference type="PaxDb" id="9606-ENSP00000303997"/>
<dbReference type="PeptideAtlas" id="Q9BX10"/>
<dbReference type="ProteomicsDB" id="79339">
    <molecule id="Q9BX10-1"/>
</dbReference>
<dbReference type="ProteomicsDB" id="79340">
    <molecule id="Q9BX10-2"/>
</dbReference>
<dbReference type="ProteomicsDB" id="79341">
    <molecule id="Q9BX10-3"/>
</dbReference>
<dbReference type="ProteomicsDB" id="79342">
    <molecule id="Q9BX10-4"/>
</dbReference>
<dbReference type="Pumba" id="Q9BX10"/>
<dbReference type="Antibodypedia" id="30525">
    <property type="antibodies" value="180 antibodies from 27 providers"/>
</dbReference>
<dbReference type="DNASU" id="54676"/>
<dbReference type="Ensembl" id="ENST00000307114.11">
    <molecule id="Q9BX10-2"/>
    <property type="protein sequence ID" value="ENSP00000304893.7"/>
    <property type="gene ID" value="ENSG00000172432.19"/>
</dbReference>
<dbReference type="Ensembl" id="ENST00000307126.10">
    <molecule id="Q9BX10-1"/>
    <property type="protein sequence ID" value="ENSP00000303997.5"/>
    <property type="gene ID" value="ENSG00000172432.19"/>
</dbReference>
<dbReference type="GeneID" id="54676"/>
<dbReference type="KEGG" id="hsa:54676"/>
<dbReference type="MANE-Select" id="ENST00000307126.10">
    <property type="protein sequence ID" value="ENSP00000303997.5"/>
    <property type="RefSeq nucleotide sequence ID" value="NM_019096.5"/>
    <property type="RefSeq protein sequence ID" value="NP_061969.3"/>
</dbReference>
<dbReference type="UCSC" id="uc003ovs.5">
    <molecule id="Q9BX10-1"/>
    <property type="organism name" value="human"/>
</dbReference>
<dbReference type="AGR" id="HGNC:4670"/>
<dbReference type="CTD" id="54676"/>
<dbReference type="DisGeNET" id="54676"/>
<dbReference type="GeneCards" id="GTPBP2"/>
<dbReference type="HGNC" id="HGNC:4670">
    <property type="gene designation" value="GTPBP2"/>
</dbReference>
<dbReference type="HPA" id="ENSG00000172432">
    <property type="expression patterns" value="Low tissue specificity"/>
</dbReference>
<dbReference type="MalaCards" id="GTPBP2"/>
<dbReference type="MIM" id="607434">
    <property type="type" value="gene"/>
</dbReference>
<dbReference type="MIM" id="617988">
    <property type="type" value="phenotype"/>
</dbReference>
<dbReference type="neXtProt" id="NX_Q9BX10"/>
<dbReference type="OpenTargets" id="ENSG00000172432"/>
<dbReference type="PharmGKB" id="PA29058"/>
<dbReference type="VEuPathDB" id="HostDB:ENSG00000172432"/>
<dbReference type="eggNOG" id="KOG1143">
    <property type="taxonomic scope" value="Eukaryota"/>
</dbReference>
<dbReference type="GeneTree" id="ENSGT00940000155636"/>
<dbReference type="HOGENOM" id="CLU_012821_1_1_1"/>
<dbReference type="InParanoid" id="Q9BX10"/>
<dbReference type="OMA" id="WEDICEN"/>
<dbReference type="OrthoDB" id="248233at2759"/>
<dbReference type="PAN-GO" id="Q9BX10">
    <property type="GO annotations" value="2 GO annotations based on evolutionary models"/>
</dbReference>
<dbReference type="PhylomeDB" id="Q9BX10"/>
<dbReference type="TreeFam" id="TF350446"/>
<dbReference type="PathwayCommons" id="Q9BX10"/>
<dbReference type="Reactome" id="R-HSA-114608">
    <property type="pathway name" value="Platelet degranulation"/>
</dbReference>
<dbReference type="SignaLink" id="Q9BX10"/>
<dbReference type="BioGRID-ORCS" id="54676">
    <property type="hits" value="32 hits in 1162 CRISPR screens"/>
</dbReference>
<dbReference type="ChiTaRS" id="GTPBP2">
    <property type="organism name" value="human"/>
</dbReference>
<dbReference type="GenomeRNAi" id="54676"/>
<dbReference type="Pharos" id="Q9BX10">
    <property type="development level" value="Tbio"/>
</dbReference>
<dbReference type="PRO" id="PR:Q9BX10"/>
<dbReference type="Proteomes" id="UP000005640">
    <property type="component" value="Chromosome 6"/>
</dbReference>
<dbReference type="RNAct" id="Q9BX10">
    <property type="molecule type" value="protein"/>
</dbReference>
<dbReference type="Bgee" id="ENSG00000172432">
    <property type="expression patterns" value="Expressed in lower esophagus mucosa and 171 other cell types or tissues"/>
</dbReference>
<dbReference type="ExpressionAtlas" id="Q9BX10">
    <property type="expression patterns" value="baseline and differential"/>
</dbReference>
<dbReference type="GO" id="GO:0005576">
    <property type="term" value="C:extracellular region"/>
    <property type="evidence" value="ECO:0000304"/>
    <property type="project" value="Reactome"/>
</dbReference>
<dbReference type="GO" id="GO:0031093">
    <property type="term" value="C:platelet alpha granule lumen"/>
    <property type="evidence" value="ECO:0000304"/>
    <property type="project" value="Reactome"/>
</dbReference>
<dbReference type="GO" id="GO:1904678">
    <property type="term" value="F:alpha-aminoacyl-tRNA binding"/>
    <property type="evidence" value="ECO:0000314"/>
    <property type="project" value="FlyBase"/>
</dbReference>
<dbReference type="GO" id="GO:0005525">
    <property type="term" value="F:GTP binding"/>
    <property type="evidence" value="ECO:0000314"/>
    <property type="project" value="FlyBase"/>
</dbReference>
<dbReference type="GO" id="GO:0003924">
    <property type="term" value="F:GTPase activity"/>
    <property type="evidence" value="ECO:0007669"/>
    <property type="project" value="InterPro"/>
</dbReference>
<dbReference type="GO" id="GO:0042802">
    <property type="term" value="F:identical protein binding"/>
    <property type="evidence" value="ECO:0000353"/>
    <property type="project" value="IntAct"/>
</dbReference>
<dbReference type="GO" id="GO:0070966">
    <property type="term" value="P:nuclear-transcribed mRNA catabolic process, no-go decay"/>
    <property type="evidence" value="ECO:0007669"/>
    <property type="project" value="Ensembl"/>
</dbReference>
<dbReference type="GO" id="GO:0072344">
    <property type="term" value="P:rescue of stalled ribosome"/>
    <property type="evidence" value="ECO:0007669"/>
    <property type="project" value="Ensembl"/>
</dbReference>
<dbReference type="GO" id="GO:0006414">
    <property type="term" value="P:translational elongation"/>
    <property type="evidence" value="ECO:0000318"/>
    <property type="project" value="GO_Central"/>
</dbReference>
<dbReference type="CDD" id="cd04165">
    <property type="entry name" value="GTPBP1_like"/>
    <property type="match status" value="1"/>
</dbReference>
<dbReference type="CDD" id="cd03694">
    <property type="entry name" value="GTPBP_II"/>
    <property type="match status" value="1"/>
</dbReference>
<dbReference type="CDD" id="cd03708">
    <property type="entry name" value="GTPBP_III"/>
    <property type="match status" value="1"/>
</dbReference>
<dbReference type="FunFam" id="2.40.30.10:FF:000058">
    <property type="entry name" value="GTP binding protein 2"/>
    <property type="match status" value="1"/>
</dbReference>
<dbReference type="FunFam" id="2.40.30.10:FF:000014">
    <property type="entry name" value="Probable GTP-binding protein 1"/>
    <property type="match status" value="1"/>
</dbReference>
<dbReference type="FunFam" id="3.40.50.300:FF:000091">
    <property type="entry name" value="Probable GTP-binding protein 1"/>
    <property type="match status" value="1"/>
</dbReference>
<dbReference type="Gene3D" id="3.40.50.300">
    <property type="entry name" value="P-loop containing nucleotide triphosphate hydrolases"/>
    <property type="match status" value="1"/>
</dbReference>
<dbReference type="Gene3D" id="2.40.30.10">
    <property type="entry name" value="Translation factors"/>
    <property type="match status" value="2"/>
</dbReference>
<dbReference type="InterPro" id="IPR050055">
    <property type="entry name" value="EF-Tu_GTPase"/>
</dbReference>
<dbReference type="InterPro" id="IPR035531">
    <property type="entry name" value="GTPBP1-like"/>
</dbReference>
<dbReference type="InterPro" id="IPR027417">
    <property type="entry name" value="P-loop_NTPase"/>
</dbReference>
<dbReference type="InterPro" id="IPR000795">
    <property type="entry name" value="T_Tr_GTP-bd_dom"/>
</dbReference>
<dbReference type="InterPro" id="IPR009000">
    <property type="entry name" value="Transl_B-barrel_sf"/>
</dbReference>
<dbReference type="InterPro" id="IPR009001">
    <property type="entry name" value="Transl_elong_EF1A/Init_IF2_C"/>
</dbReference>
<dbReference type="PANTHER" id="PTHR43721">
    <property type="entry name" value="ELONGATION FACTOR TU-RELATED"/>
    <property type="match status" value="1"/>
</dbReference>
<dbReference type="PANTHER" id="PTHR43721:SF3">
    <property type="entry name" value="GTP-BINDING PROTEIN 2"/>
    <property type="match status" value="1"/>
</dbReference>
<dbReference type="Pfam" id="PF00009">
    <property type="entry name" value="GTP_EFTU"/>
    <property type="match status" value="1"/>
</dbReference>
<dbReference type="SUPFAM" id="SSF50465">
    <property type="entry name" value="EF-Tu/eEF-1alpha/eIF2-gamma C-terminal domain"/>
    <property type="match status" value="1"/>
</dbReference>
<dbReference type="SUPFAM" id="SSF52540">
    <property type="entry name" value="P-loop containing nucleoside triphosphate hydrolases"/>
    <property type="match status" value="1"/>
</dbReference>
<dbReference type="SUPFAM" id="SSF50447">
    <property type="entry name" value="Translation proteins"/>
    <property type="match status" value="1"/>
</dbReference>
<dbReference type="PROSITE" id="PS51722">
    <property type="entry name" value="G_TR_2"/>
    <property type="match status" value="1"/>
</dbReference>
<feature type="chain" id="PRO_0000248500" description="GTP-binding protein 2">
    <location>
        <begin position="1"/>
        <end position="602"/>
    </location>
</feature>
<feature type="domain" description="tr-type G" evidence="2">
    <location>
        <begin position="170"/>
        <end position="398"/>
    </location>
</feature>
<feature type="region of interest" description="Disordered" evidence="3">
    <location>
        <begin position="16"/>
        <end position="64"/>
    </location>
</feature>
<feature type="compositionally biased region" description="Basic residues" evidence="3">
    <location>
        <begin position="40"/>
        <end position="50"/>
    </location>
</feature>
<feature type="binding site" evidence="1">
    <location>
        <begin position="179"/>
        <end position="186"/>
    </location>
    <ligand>
        <name>GTP</name>
        <dbReference type="ChEBI" id="CHEBI:37565"/>
    </ligand>
</feature>
<feature type="binding site" evidence="1">
    <location>
        <begin position="260"/>
        <end position="264"/>
    </location>
    <ligand>
        <name>GTP</name>
        <dbReference type="ChEBI" id="CHEBI:37565"/>
    </ligand>
</feature>
<feature type="binding site" evidence="1">
    <location>
        <begin position="316"/>
        <end position="319"/>
    </location>
    <ligand>
        <name>GTP</name>
        <dbReference type="ChEBI" id="CHEBI:37565"/>
    </ligand>
</feature>
<feature type="splice variant" id="VSP_052154" description="In isoform 2 and isoform 3." evidence="12 14">
    <location>
        <begin position="1"/>
        <end position="88"/>
    </location>
</feature>
<feature type="splice variant" id="VSP_052155" description="In isoform 4." evidence="13">
    <location>
        <begin position="72"/>
        <end position="79"/>
    </location>
</feature>
<feature type="splice variant" id="VSP_052156" description="In isoform 3." evidence="14">
    <location>
        <begin position="101"/>
        <end position="370"/>
    </location>
</feature>
<feature type="sequence variant" id="VAR_089984" description="In JABELS; likely pathogenic." evidence="11">
    <location>
        <begin position="3"/>
        <end position="602"/>
    </location>
</feature>
<feature type="sequence variant" id="VAR_089985" description="In JABELS; uncertain significance." evidence="11">
    <original>L</original>
    <variation>P</variation>
    <location>
        <position position="93"/>
    </location>
</feature>
<feature type="sequence variant" id="VAR_089986" description="In JABELS; likely pathogenic." evidence="11">
    <location>
        <begin position="121"/>
        <end position="602"/>
    </location>
</feature>
<feature type="sequence variant" id="VAR_089987" description="In JABELS; uncertain significance." evidence="11">
    <original>K</original>
    <variation>R</variation>
    <location>
        <position position="125"/>
    </location>
</feature>
<feature type="sequence variant" id="VAR_080975" description="In JABELS; likely pathogenic." evidence="9">
    <location>
        <begin position="144"/>
        <end position="602"/>
    </location>
</feature>
<feature type="sequence variant" id="VAR_089988" description="In JABELS; likely pathogenic." evidence="10">
    <location>
        <begin position="219"/>
        <end position="602"/>
    </location>
</feature>
<feature type="sequence variant" id="VAR_089989" description="In JABELS; uncertain significance; dbSNP:rs1399993191." evidence="11">
    <original>D</original>
    <variation>N</variation>
    <location>
        <position position="319"/>
    </location>
</feature>
<feature type="sequence variant" id="VAR_089990" description="In JABELS; likely pathogenic." evidence="11">
    <location>
        <begin position="332"/>
        <end position="602"/>
    </location>
</feature>
<feature type="sequence variant" id="VAR_080976" description="In JABELS; likely pathogenic." evidence="9">
    <location>
        <begin position="407"/>
        <end position="602"/>
    </location>
</feature>
<feature type="sequence variant" id="VAR_080977" description="In JABELS; likely pathogenic." evidence="9 10 11">
    <location>
        <begin position="470"/>
        <end position="602"/>
    </location>
</feature>
<feature type="sequence variant" id="VAR_089991" description="In JABELS; uncertain significance." evidence="10">
    <location>
        <begin position="520"/>
        <end position="602"/>
    </location>
</feature>
<feature type="sequence variant" id="VAR_089992" description="In JABELS; uncertain significance." evidence="11">
    <location>
        <begin position="521"/>
        <end position="602"/>
    </location>
</feature>
<feature type="sequence conflict" description="In Ref. 5; AAF78884." evidence="15" ref="5">
    <original>KK</original>
    <variation>TR</variation>
    <location>
        <begin position="42"/>
        <end position="43"/>
    </location>
</feature>
<feature type="sequence conflict" description="In Ref. 1; BAB12431." evidence="15" ref="1">
    <original>G</original>
    <variation>E</variation>
    <location>
        <position position="234"/>
    </location>
</feature>
<keyword id="KW-0025">Alternative splicing</keyword>
<keyword id="KW-0225">Disease variant</keyword>
<keyword id="KW-0342">GTP-binding</keyword>
<keyword id="KW-0991">Intellectual disability</keyword>
<keyword id="KW-0547">Nucleotide-binding</keyword>
<keyword id="KW-1267">Proteomics identification</keyword>
<keyword id="KW-1185">Reference proteome</keyword>
<organism>
    <name type="scientific">Homo sapiens</name>
    <name type="common">Human</name>
    <dbReference type="NCBI Taxonomy" id="9606"/>
    <lineage>
        <taxon>Eukaryota</taxon>
        <taxon>Metazoa</taxon>
        <taxon>Chordata</taxon>
        <taxon>Craniata</taxon>
        <taxon>Vertebrata</taxon>
        <taxon>Euteleostomi</taxon>
        <taxon>Mammalia</taxon>
        <taxon>Eutheria</taxon>
        <taxon>Euarchontoglires</taxon>
        <taxon>Primates</taxon>
        <taxon>Haplorrhini</taxon>
        <taxon>Catarrhini</taxon>
        <taxon>Hominidae</taxon>
        <taxon>Homo</taxon>
    </lineage>
</organism>
<sequence>MDSRVSELFGGCCRPGGGPAVGGTLKARGAGSSSGCGGPKGKKKNGRNRGGKANNPPYLPPEAEDGNIEYKLKLVNPSQYRFEHLVTQMKWRLQEGRGEAVYQIGVEDNGLLVGLAEEEMRASLKTLHRMAEKVGADITVLREREVDYDSDMPRKITEVLVRKVPDNQQFLDLRVAVLGNVDSGKSTLLGVLTQGELDNGRGRARLNLFRHLHEIQSGRTSSISFEILGFNSKGEVVNYSDSRTAEEICESSSKMITFIDLAGHHKYLHTTIFGLTSYCPDCALLLVSANTGIAGTTREHLGLALALKVPFFIVVSKIDLCAKTTVERTVRQLERVLKQPGCHKVPMLVTSEDDAVTAAQQFAQSPNVTPIFTLSSVSGESLDLLKVFLNILPPLTNSKEQEELMQQLTEFQVDEIYTVPEVGTVVGGTLSSGICREGDQLVVGPTDDGCFLELRVCSIQRNRSACRVLRAGQAATLALGDFDRALLRKGMVMVSPEMNPTICSVFEAEIVLLFHATTFRRGFQVTVHVGNVRQTAVVEKIHAKDKLRTGEKAVVRFRFLKHPEYLKVGAKLLFREGVTKGIGHVTDVQAITAGEAQANMGF</sequence>
<protein>
    <recommendedName>
        <fullName>GTP-binding protein 2</fullName>
    </recommendedName>
</protein>
<accession>Q9BX10</accession>
<accession>Q5T7E8</accession>
<accession>Q8ND84</accession>
<accession>Q8TAH7</accession>
<accession>Q8WUA5</accession>
<accession>Q9HCS9</accession>
<accession>Q9NRU4</accession>
<accession>Q9NX60</accession>